<accession>A9NFI4</accession>
<sequence length="393" mass="42933">MKILSVNAGSSSLKFQLLQMPEEFEIASGLVERIGNKNAEFKIKFNGSSKTQSDLVVLDHSVAVDLVIKGLLENKVIASLDEIQGVGHRVVQGGQLFKESVVIDDDVVIKIASLNDLAPLHNPANIIGINAFRKAISNVIHVAVFDTTFHQTMPEENFLYGTPYEWYTKHGVRKYGFHGTSHQYVSELAHARLGKDHSRIIVAHIGNGASITAVRDGKSIDTSMGLTPLEGFPTGTRSGNVDPAIFQLMQQKEGYSLEKTLNELNKNSGYLGISGVSHDSRDIIAAAEGGNKRAQLALDIQAKRIVDYIASYYVLLGGLDALVFTAGIGENAKEVRKLICDRLGVLGIKLDDNKNNSRGDKEISSDASNVKIWVIPTNEEVMIARDVLRLQNK</sequence>
<proteinExistence type="inferred from homology"/>
<name>ACKA_ACHLI</name>
<gene>
    <name evidence="1" type="primary">ackA</name>
    <name type="ordered locus">ACL_0496</name>
</gene>
<organism>
    <name type="scientific">Acholeplasma laidlawii (strain PG-8A)</name>
    <dbReference type="NCBI Taxonomy" id="441768"/>
    <lineage>
        <taxon>Bacteria</taxon>
        <taxon>Bacillati</taxon>
        <taxon>Mycoplasmatota</taxon>
        <taxon>Mollicutes</taxon>
        <taxon>Acholeplasmatales</taxon>
        <taxon>Acholeplasmataceae</taxon>
        <taxon>Acholeplasma</taxon>
    </lineage>
</organism>
<comment type="function">
    <text evidence="1">Catalyzes the formation of acetyl phosphate from acetate and ATP. Can also catalyze the reverse reaction.</text>
</comment>
<comment type="catalytic activity">
    <reaction evidence="1">
        <text>acetate + ATP = acetyl phosphate + ADP</text>
        <dbReference type="Rhea" id="RHEA:11352"/>
        <dbReference type="ChEBI" id="CHEBI:22191"/>
        <dbReference type="ChEBI" id="CHEBI:30089"/>
        <dbReference type="ChEBI" id="CHEBI:30616"/>
        <dbReference type="ChEBI" id="CHEBI:456216"/>
        <dbReference type="EC" id="2.7.2.1"/>
    </reaction>
</comment>
<comment type="cofactor">
    <cofactor evidence="1">
        <name>Mg(2+)</name>
        <dbReference type="ChEBI" id="CHEBI:18420"/>
    </cofactor>
    <cofactor evidence="1">
        <name>Mn(2+)</name>
        <dbReference type="ChEBI" id="CHEBI:29035"/>
    </cofactor>
    <text evidence="1">Mg(2+). Can also accept Mn(2+).</text>
</comment>
<comment type="pathway">
    <text evidence="1">Metabolic intermediate biosynthesis; acetyl-CoA biosynthesis; acetyl-CoA from acetate: step 1/2.</text>
</comment>
<comment type="subunit">
    <text evidence="1">Homodimer.</text>
</comment>
<comment type="subcellular location">
    <subcellularLocation>
        <location evidence="1">Cytoplasm</location>
    </subcellularLocation>
</comment>
<comment type="similarity">
    <text evidence="1">Belongs to the acetokinase family.</text>
</comment>
<evidence type="ECO:0000255" key="1">
    <source>
        <dbReference type="HAMAP-Rule" id="MF_00020"/>
    </source>
</evidence>
<protein>
    <recommendedName>
        <fullName evidence="1">Acetate kinase</fullName>
        <ecNumber evidence="1">2.7.2.1</ecNumber>
    </recommendedName>
    <alternativeName>
        <fullName evidence="1">Acetokinase</fullName>
    </alternativeName>
</protein>
<reference key="1">
    <citation type="journal article" date="2011" name="J. Bacteriol.">
        <title>Complete genome and proteome of Acholeplasma laidlawii.</title>
        <authorList>
            <person name="Lazarev V.N."/>
            <person name="Levitskii S.A."/>
            <person name="Basovskii Y.I."/>
            <person name="Chukin M.M."/>
            <person name="Akopian T.A."/>
            <person name="Vereshchagin V.V."/>
            <person name="Kostrjukova E.S."/>
            <person name="Kovaleva G.Y."/>
            <person name="Kazanov M.D."/>
            <person name="Malko D.B."/>
            <person name="Vitreschak A.G."/>
            <person name="Sernova N.V."/>
            <person name="Gelfand M.S."/>
            <person name="Demina I.A."/>
            <person name="Serebryakova M.V."/>
            <person name="Galyamina M.A."/>
            <person name="Vtyurin N.N."/>
            <person name="Rogov S.I."/>
            <person name="Alexeev D.G."/>
            <person name="Ladygina V.G."/>
            <person name="Govorun V.M."/>
        </authorList>
    </citation>
    <scope>NUCLEOTIDE SEQUENCE [LARGE SCALE GENOMIC DNA]</scope>
    <source>
        <strain>PG-8A</strain>
    </source>
</reference>
<dbReference type="EC" id="2.7.2.1" evidence="1"/>
<dbReference type="EMBL" id="CP000896">
    <property type="protein sequence ID" value="ABX81114.1"/>
    <property type="molecule type" value="Genomic_DNA"/>
</dbReference>
<dbReference type="RefSeq" id="WP_012242445.1">
    <property type="nucleotide sequence ID" value="NC_010163.1"/>
</dbReference>
<dbReference type="SMR" id="A9NFI4"/>
<dbReference type="STRING" id="441768.ACL_0496"/>
<dbReference type="GeneID" id="41338676"/>
<dbReference type="KEGG" id="acl:ACL_0496"/>
<dbReference type="eggNOG" id="COG0282">
    <property type="taxonomic scope" value="Bacteria"/>
</dbReference>
<dbReference type="HOGENOM" id="CLU_020352_0_1_14"/>
<dbReference type="OrthoDB" id="9802453at2"/>
<dbReference type="UniPathway" id="UPA00340">
    <property type="reaction ID" value="UER00458"/>
</dbReference>
<dbReference type="Proteomes" id="UP000008558">
    <property type="component" value="Chromosome"/>
</dbReference>
<dbReference type="GO" id="GO:0005737">
    <property type="term" value="C:cytoplasm"/>
    <property type="evidence" value="ECO:0007669"/>
    <property type="project" value="UniProtKB-SubCell"/>
</dbReference>
<dbReference type="GO" id="GO:0008776">
    <property type="term" value="F:acetate kinase activity"/>
    <property type="evidence" value="ECO:0007669"/>
    <property type="project" value="UniProtKB-UniRule"/>
</dbReference>
<dbReference type="GO" id="GO:0005524">
    <property type="term" value="F:ATP binding"/>
    <property type="evidence" value="ECO:0007669"/>
    <property type="project" value="UniProtKB-KW"/>
</dbReference>
<dbReference type="GO" id="GO:0000287">
    <property type="term" value="F:magnesium ion binding"/>
    <property type="evidence" value="ECO:0007669"/>
    <property type="project" value="UniProtKB-UniRule"/>
</dbReference>
<dbReference type="GO" id="GO:0006083">
    <property type="term" value="P:acetate metabolic process"/>
    <property type="evidence" value="ECO:0007669"/>
    <property type="project" value="TreeGrafter"/>
</dbReference>
<dbReference type="GO" id="GO:0006085">
    <property type="term" value="P:acetyl-CoA biosynthetic process"/>
    <property type="evidence" value="ECO:0007669"/>
    <property type="project" value="UniProtKB-UniRule"/>
</dbReference>
<dbReference type="CDD" id="cd24010">
    <property type="entry name" value="ASKHA_NBD_AcK_PK"/>
    <property type="match status" value="1"/>
</dbReference>
<dbReference type="Gene3D" id="3.30.420.40">
    <property type="match status" value="2"/>
</dbReference>
<dbReference type="HAMAP" id="MF_00020">
    <property type="entry name" value="Acetate_kinase"/>
    <property type="match status" value="1"/>
</dbReference>
<dbReference type="InterPro" id="IPR004372">
    <property type="entry name" value="Ac/propionate_kinase"/>
</dbReference>
<dbReference type="InterPro" id="IPR000890">
    <property type="entry name" value="Aliphatic_acid_kin_short-chain"/>
</dbReference>
<dbReference type="InterPro" id="IPR023865">
    <property type="entry name" value="Aliphatic_acid_kinase_CS"/>
</dbReference>
<dbReference type="InterPro" id="IPR043129">
    <property type="entry name" value="ATPase_NBD"/>
</dbReference>
<dbReference type="NCBIfam" id="TIGR00016">
    <property type="entry name" value="ackA"/>
    <property type="match status" value="1"/>
</dbReference>
<dbReference type="PANTHER" id="PTHR21060">
    <property type="entry name" value="ACETATE KINASE"/>
    <property type="match status" value="1"/>
</dbReference>
<dbReference type="PANTHER" id="PTHR21060:SF15">
    <property type="entry name" value="ACETATE KINASE-RELATED"/>
    <property type="match status" value="1"/>
</dbReference>
<dbReference type="Pfam" id="PF00871">
    <property type="entry name" value="Acetate_kinase"/>
    <property type="match status" value="1"/>
</dbReference>
<dbReference type="PIRSF" id="PIRSF000722">
    <property type="entry name" value="Acetate_prop_kin"/>
    <property type="match status" value="1"/>
</dbReference>
<dbReference type="PRINTS" id="PR00471">
    <property type="entry name" value="ACETATEKNASE"/>
</dbReference>
<dbReference type="SUPFAM" id="SSF53067">
    <property type="entry name" value="Actin-like ATPase domain"/>
    <property type="match status" value="2"/>
</dbReference>
<dbReference type="PROSITE" id="PS01075">
    <property type="entry name" value="ACETATE_KINASE_1"/>
    <property type="match status" value="1"/>
</dbReference>
<dbReference type="PROSITE" id="PS01076">
    <property type="entry name" value="ACETATE_KINASE_2"/>
    <property type="match status" value="1"/>
</dbReference>
<feature type="chain" id="PRO_1000074180" description="Acetate kinase">
    <location>
        <begin position="1"/>
        <end position="393"/>
    </location>
</feature>
<feature type="active site" description="Proton donor/acceptor" evidence="1">
    <location>
        <position position="146"/>
    </location>
</feature>
<feature type="binding site" evidence="1">
    <location>
        <position position="7"/>
    </location>
    <ligand>
        <name>Mg(2+)</name>
        <dbReference type="ChEBI" id="CHEBI:18420"/>
    </ligand>
</feature>
<feature type="binding site" evidence="1">
    <location>
        <position position="14"/>
    </location>
    <ligand>
        <name>ATP</name>
        <dbReference type="ChEBI" id="CHEBI:30616"/>
    </ligand>
</feature>
<feature type="binding site" evidence="1">
    <location>
        <position position="89"/>
    </location>
    <ligand>
        <name>substrate</name>
    </ligand>
</feature>
<feature type="binding site" evidence="1">
    <location>
        <begin position="204"/>
        <end position="208"/>
    </location>
    <ligand>
        <name>ATP</name>
        <dbReference type="ChEBI" id="CHEBI:30616"/>
    </ligand>
</feature>
<feature type="binding site" evidence="1">
    <location>
        <begin position="279"/>
        <end position="281"/>
    </location>
    <ligand>
        <name>ATP</name>
        <dbReference type="ChEBI" id="CHEBI:30616"/>
    </ligand>
</feature>
<feature type="binding site" evidence="1">
    <location>
        <begin position="327"/>
        <end position="331"/>
    </location>
    <ligand>
        <name>ATP</name>
        <dbReference type="ChEBI" id="CHEBI:30616"/>
    </ligand>
</feature>
<feature type="binding site" evidence="1">
    <location>
        <position position="379"/>
    </location>
    <ligand>
        <name>Mg(2+)</name>
        <dbReference type="ChEBI" id="CHEBI:18420"/>
    </ligand>
</feature>
<feature type="site" description="Transition state stabilizer" evidence="1">
    <location>
        <position position="178"/>
    </location>
</feature>
<feature type="site" description="Transition state stabilizer" evidence="1">
    <location>
        <position position="237"/>
    </location>
</feature>
<keyword id="KW-0067">ATP-binding</keyword>
<keyword id="KW-0963">Cytoplasm</keyword>
<keyword id="KW-0418">Kinase</keyword>
<keyword id="KW-0460">Magnesium</keyword>
<keyword id="KW-0479">Metal-binding</keyword>
<keyword id="KW-0547">Nucleotide-binding</keyword>
<keyword id="KW-1185">Reference proteome</keyword>
<keyword id="KW-0808">Transferase</keyword>